<gene>
    <name type="primary">ddit4</name>
    <name type="synonym">redd1</name>
</gene>
<evidence type="ECO:0000250" key="1"/>
<evidence type="ECO:0000305" key="2"/>
<comment type="function">
    <text evidence="1">Regulates cell growth, proliferation and survival via inhibition of the activity of the mammalian target of rapamycin complex 1 (mTORC1). Inhibition of mTORC1 is mediated by a pathway that involves ddit4/redd1, akt1, the tsc1-tsc2 complex and the GTPase rheb. Plays an important role in responses to cellular energy levels and cellular stress, including responses to hypoxia and DNA damage, via its effect on mTORC1 activity. Plays a role in neuronal differentiation, neuron migration during embryonic brain development and in neuronal cell death (By similarity).</text>
</comment>
<comment type="subcellular location">
    <subcellularLocation>
        <location evidence="1">Cytoplasm</location>
    </subcellularLocation>
    <subcellularLocation>
        <location evidence="1">Mitochondrion</location>
    </subcellularLocation>
</comment>
<comment type="similarity">
    <text evidence="2">Belongs to the DDIT4 family.</text>
</comment>
<dbReference type="EMBL" id="BC063371">
    <property type="protein sequence ID" value="AAH63371.1"/>
    <property type="molecule type" value="mRNA"/>
</dbReference>
<dbReference type="RefSeq" id="NP_989175.1">
    <property type="nucleotide sequence ID" value="NM_203844.1"/>
</dbReference>
<dbReference type="SMR" id="Q6P4J6"/>
<dbReference type="FunCoup" id="Q6P4J6">
    <property type="interactions" value="1295"/>
</dbReference>
<dbReference type="STRING" id="8364.ENSXETP00000040167"/>
<dbReference type="PaxDb" id="8364-ENSXETP00000056596"/>
<dbReference type="DNASU" id="394782"/>
<dbReference type="GeneID" id="394782"/>
<dbReference type="KEGG" id="xtr:394782"/>
<dbReference type="AGR" id="Xenbase:XB-GENE-944276"/>
<dbReference type="CTD" id="54541"/>
<dbReference type="Xenbase" id="XB-GENE-944276">
    <property type="gene designation" value="ddit4"/>
</dbReference>
<dbReference type="eggNOG" id="ENOG502RB72">
    <property type="taxonomic scope" value="Eukaryota"/>
</dbReference>
<dbReference type="HOGENOM" id="CLU_086145_1_0_1"/>
<dbReference type="InParanoid" id="Q6P4J6"/>
<dbReference type="OMA" id="MPGLWER"/>
<dbReference type="OrthoDB" id="10018535at2759"/>
<dbReference type="PhylomeDB" id="Q6P4J6"/>
<dbReference type="TreeFam" id="TF105007"/>
<dbReference type="Reactome" id="R-XTR-5628897">
    <property type="pathway name" value="TP53 Regulates Metabolic Genes"/>
</dbReference>
<dbReference type="Proteomes" id="UP000008143">
    <property type="component" value="Chromosome 7"/>
</dbReference>
<dbReference type="Bgee" id="ENSXETG00000037163">
    <property type="expression patterns" value="Expressed in blastula and 16 other cell types or tissues"/>
</dbReference>
<dbReference type="GO" id="GO:0005737">
    <property type="term" value="C:cytoplasm"/>
    <property type="evidence" value="ECO:0000250"/>
    <property type="project" value="UniProtKB"/>
</dbReference>
<dbReference type="GO" id="GO:0005739">
    <property type="term" value="C:mitochondrion"/>
    <property type="evidence" value="ECO:0007669"/>
    <property type="project" value="UniProtKB-SubCell"/>
</dbReference>
<dbReference type="GO" id="GO:0006915">
    <property type="term" value="P:apoptotic process"/>
    <property type="evidence" value="ECO:0007669"/>
    <property type="project" value="UniProtKB-KW"/>
</dbReference>
<dbReference type="GO" id="GO:0009953">
    <property type="term" value="P:dorsal/ventral pattern formation"/>
    <property type="evidence" value="ECO:0007669"/>
    <property type="project" value="Ensembl"/>
</dbReference>
<dbReference type="GO" id="GO:0009968">
    <property type="term" value="P:negative regulation of signal transduction"/>
    <property type="evidence" value="ECO:0007669"/>
    <property type="project" value="InterPro"/>
</dbReference>
<dbReference type="FunFam" id="3.90.470.40:FF:000001">
    <property type="entry name" value="DNA damage-inducible transcript 4 protein"/>
    <property type="match status" value="1"/>
</dbReference>
<dbReference type="Gene3D" id="3.90.470.40">
    <property type="entry name" value="RTP801-like"/>
    <property type="match status" value="1"/>
</dbReference>
<dbReference type="InterPro" id="IPR012918">
    <property type="entry name" value="RTP801-like"/>
</dbReference>
<dbReference type="InterPro" id="IPR038281">
    <property type="entry name" value="RTP801-like_C_sf"/>
</dbReference>
<dbReference type="PANTHER" id="PTHR12478:SF7">
    <property type="entry name" value="DNA DAMAGE-INDUCIBLE TRANSCRIPT 4 PROTEIN"/>
    <property type="match status" value="1"/>
</dbReference>
<dbReference type="PANTHER" id="PTHR12478">
    <property type="entry name" value="DNA-DAMAGE-INDUCIBLE TRANSCRIPT 4 PROTEIN DDIT4"/>
    <property type="match status" value="1"/>
</dbReference>
<dbReference type="Pfam" id="PF07809">
    <property type="entry name" value="RTP801_C"/>
    <property type="match status" value="1"/>
</dbReference>
<accession>Q6P4J6</accession>
<feature type="chain" id="PRO_0000307202" description="DNA damage-inducible transcript 4 protein">
    <location>
        <begin position="1"/>
        <end position="219"/>
    </location>
</feature>
<organism>
    <name type="scientific">Xenopus tropicalis</name>
    <name type="common">Western clawed frog</name>
    <name type="synonym">Silurana tropicalis</name>
    <dbReference type="NCBI Taxonomy" id="8364"/>
    <lineage>
        <taxon>Eukaryota</taxon>
        <taxon>Metazoa</taxon>
        <taxon>Chordata</taxon>
        <taxon>Craniata</taxon>
        <taxon>Vertebrata</taxon>
        <taxon>Euteleostomi</taxon>
        <taxon>Amphibia</taxon>
        <taxon>Batrachia</taxon>
        <taxon>Anura</taxon>
        <taxon>Pipoidea</taxon>
        <taxon>Pipidae</taxon>
        <taxon>Xenopodinae</taxon>
        <taxon>Xenopus</taxon>
        <taxon>Silurana</taxon>
    </lineage>
</organism>
<proteinExistence type="evidence at transcript level"/>
<name>DDIT4_XENTR</name>
<protein>
    <recommendedName>
        <fullName>DNA damage-inducible transcript 4 protein</fullName>
    </recommendedName>
    <alternativeName>
        <fullName>Protein regulated in development and DNA damage response 1</fullName>
        <shortName>REDD-1</shortName>
    </alternativeName>
</protein>
<sequence length="219" mass="24277">MPARWDTFSALSVPPPILEEEPQSQFWGEDCADVSQRCSSLPSSDCESLTSSNSYSECDLDAWDEISLPDSELLNDPEGEQLCPSLLKLIKRCLTKAKINSLRCSRLLIPDELLCNLGQELLHLAYSEPCGLRGALIDLCVEHGKDCHSVAQITVDQAVVPTFQLTVLLRLDSRLWPRIQGLFSTKPVPGSGQSLKLSPGFKVLKKKLYSSEELIIEEC</sequence>
<reference key="1">
    <citation type="submission" date="2003-12" db="EMBL/GenBank/DDBJ databases">
        <authorList>
            <consortium name="NIH - Xenopus Gene Collection (XGC) project"/>
        </authorList>
    </citation>
    <scope>NUCLEOTIDE SEQUENCE [LARGE SCALE MRNA]</scope>
    <source>
        <tissue>Embryo</tissue>
    </source>
</reference>
<keyword id="KW-0053">Apoptosis</keyword>
<keyword id="KW-0963">Cytoplasm</keyword>
<keyword id="KW-0496">Mitochondrion</keyword>
<keyword id="KW-1185">Reference proteome</keyword>